<dbReference type="EC" id="1.2.7.4" evidence="1"/>
<dbReference type="EMBL" id="AE010299">
    <property type="protein sequence ID" value="AAM07211.1"/>
    <property type="molecule type" value="Genomic_DNA"/>
</dbReference>
<dbReference type="RefSeq" id="WP_011023758.1">
    <property type="nucleotide sequence ID" value="NC_003552.1"/>
</dbReference>
<dbReference type="SMR" id="Q8TJC6"/>
<dbReference type="FunCoup" id="Q8TJC6">
    <property type="interactions" value="70"/>
</dbReference>
<dbReference type="STRING" id="188937.MA_3860"/>
<dbReference type="EnsemblBacteria" id="AAM07211">
    <property type="protein sequence ID" value="AAM07211"/>
    <property type="gene ID" value="MA_3860"/>
</dbReference>
<dbReference type="GeneID" id="1475753"/>
<dbReference type="KEGG" id="mac:MA_3860"/>
<dbReference type="HOGENOM" id="CLU_361186_0_0_2"/>
<dbReference type="InParanoid" id="Q8TJC6"/>
<dbReference type="OrthoDB" id="35334at2157"/>
<dbReference type="PhylomeDB" id="Q8TJC6"/>
<dbReference type="UniPathway" id="UPA00642"/>
<dbReference type="Proteomes" id="UP000002487">
    <property type="component" value="Chromosome"/>
</dbReference>
<dbReference type="GO" id="GO:0051539">
    <property type="term" value="F:4 iron, 4 sulfur cluster binding"/>
    <property type="evidence" value="ECO:0007669"/>
    <property type="project" value="UniProtKB-KW"/>
</dbReference>
<dbReference type="GO" id="GO:0043885">
    <property type="term" value="F:anaerobic carbon-monoxide dehydrogenase activity"/>
    <property type="evidence" value="ECO:0007669"/>
    <property type="project" value="UniProtKB-UniRule"/>
</dbReference>
<dbReference type="GO" id="GO:0050418">
    <property type="term" value="F:hydroxylamine reductase activity"/>
    <property type="evidence" value="ECO:0000318"/>
    <property type="project" value="GO_Central"/>
</dbReference>
<dbReference type="GO" id="GO:0005506">
    <property type="term" value="F:iron ion binding"/>
    <property type="evidence" value="ECO:0007669"/>
    <property type="project" value="UniProtKB-UniRule"/>
</dbReference>
<dbReference type="GO" id="GO:0016151">
    <property type="term" value="F:nickel cation binding"/>
    <property type="evidence" value="ECO:0007669"/>
    <property type="project" value="UniProtKB-UniRule"/>
</dbReference>
<dbReference type="GO" id="GO:0004601">
    <property type="term" value="F:peroxidase activity"/>
    <property type="evidence" value="ECO:0000318"/>
    <property type="project" value="GO_Central"/>
</dbReference>
<dbReference type="GO" id="GO:0006084">
    <property type="term" value="P:acetyl-CoA metabolic process"/>
    <property type="evidence" value="ECO:0007669"/>
    <property type="project" value="InterPro"/>
</dbReference>
<dbReference type="GO" id="GO:0019385">
    <property type="term" value="P:methanogenesis, from acetate"/>
    <property type="evidence" value="ECO:0007669"/>
    <property type="project" value="UniProtKB-UniRule"/>
</dbReference>
<dbReference type="GO" id="GO:0046210">
    <property type="term" value="P:nitric oxide catabolic process"/>
    <property type="evidence" value="ECO:0000318"/>
    <property type="project" value="GO_Central"/>
</dbReference>
<dbReference type="GO" id="GO:0042542">
    <property type="term" value="P:response to hydrogen peroxide"/>
    <property type="evidence" value="ECO:0000318"/>
    <property type="project" value="GO_Central"/>
</dbReference>
<dbReference type="FunFam" id="1.10.8.190:FF:000001">
    <property type="entry name" value="Acetyl-CoA decarbonylase/synthase complex subunit alpha 1"/>
    <property type="match status" value="1"/>
</dbReference>
<dbReference type="FunFam" id="3.40.50.2030:FF:000004">
    <property type="entry name" value="Acetyl-CoA decarbonylase/synthase complex subunit alpha 1"/>
    <property type="match status" value="1"/>
</dbReference>
<dbReference type="FunFam" id="3.40.50.2030:FF:000006">
    <property type="entry name" value="Acetyl-CoA decarbonylase/synthase complex subunit alpha 1"/>
    <property type="match status" value="1"/>
</dbReference>
<dbReference type="Gene3D" id="3.30.70.20">
    <property type="match status" value="1"/>
</dbReference>
<dbReference type="Gene3D" id="3.40.50.2030">
    <property type="match status" value="2"/>
</dbReference>
<dbReference type="Gene3D" id="1.10.8.190">
    <property type="entry name" value="Carbon monoxide dehydrogenase alpha subunit. Chain M, domain 1"/>
    <property type="match status" value="1"/>
</dbReference>
<dbReference type="HAMAP" id="MF_01137">
    <property type="entry name" value="CdhA"/>
    <property type="match status" value="1"/>
</dbReference>
<dbReference type="InterPro" id="IPR017896">
    <property type="entry name" value="4Fe4S_Fe-S-bd"/>
</dbReference>
<dbReference type="InterPro" id="IPR017900">
    <property type="entry name" value="4Fe4S_Fe_S_CS"/>
</dbReference>
<dbReference type="InterPro" id="IPR004460">
    <property type="entry name" value="CdhA"/>
</dbReference>
<dbReference type="InterPro" id="IPR004137">
    <property type="entry name" value="HCP/CODH"/>
</dbReference>
<dbReference type="InterPro" id="IPR016099">
    <property type="entry name" value="Prismane-like_a/b-sand"/>
</dbReference>
<dbReference type="InterPro" id="IPR011254">
    <property type="entry name" value="Prismane-like_sf"/>
</dbReference>
<dbReference type="NCBIfam" id="TIGR00314">
    <property type="entry name" value="cdhA"/>
    <property type="match status" value="1"/>
</dbReference>
<dbReference type="PANTHER" id="PTHR30109:SF6">
    <property type="entry name" value="ACETYL-COA DECARBONYLASE_SYNTHASE COMPLEX SUBUNIT ALPHA"/>
    <property type="match status" value="1"/>
</dbReference>
<dbReference type="PANTHER" id="PTHR30109">
    <property type="entry name" value="HYDROXYLAMINE REDUCTASE"/>
    <property type="match status" value="1"/>
</dbReference>
<dbReference type="Pfam" id="PF13187">
    <property type="entry name" value="Fer4_9"/>
    <property type="match status" value="1"/>
</dbReference>
<dbReference type="Pfam" id="PF03063">
    <property type="entry name" value="Prismane"/>
    <property type="match status" value="2"/>
</dbReference>
<dbReference type="SUPFAM" id="SSF46548">
    <property type="entry name" value="alpha-helical ferredoxin"/>
    <property type="match status" value="1"/>
</dbReference>
<dbReference type="SUPFAM" id="SSF56821">
    <property type="entry name" value="Prismane protein-like"/>
    <property type="match status" value="1"/>
</dbReference>
<dbReference type="PROSITE" id="PS00198">
    <property type="entry name" value="4FE4S_FER_1"/>
    <property type="match status" value="1"/>
</dbReference>
<dbReference type="PROSITE" id="PS51379">
    <property type="entry name" value="4FE4S_FER_2"/>
    <property type="match status" value="2"/>
</dbReference>
<protein>
    <recommendedName>
        <fullName evidence="1">Acetyl-CoA decarbonylase/synthase complex subunit alpha 2</fullName>
        <shortName evidence="1">ACDS complex subunit alpha 2</shortName>
        <ecNumber evidence="1">1.2.7.4</ecNumber>
    </recommendedName>
    <alternativeName>
        <fullName evidence="1">ACDS complex carbon monoxide dehydrogenase subunit alpha 2</fullName>
        <shortName evidence="1">ACDS CODH subunit alpha 2</shortName>
    </alternativeName>
</protein>
<feature type="chain" id="PRO_0000155075" description="Acetyl-CoA decarbonylase/synthase complex subunit alpha 2">
    <location>
        <begin position="1"/>
        <end position="805"/>
    </location>
</feature>
<feature type="domain" description="4Fe-4S ferredoxin-type 1" evidence="1">
    <location>
        <begin position="407"/>
        <end position="435"/>
    </location>
</feature>
<feature type="domain" description="4Fe-4S ferredoxin-type 2" evidence="1">
    <location>
        <begin position="445"/>
        <end position="474"/>
    </location>
</feature>
<feature type="binding site" evidence="1">
    <location>
        <position position="72"/>
    </location>
    <ligand>
        <name>[4Fe-4S] cluster</name>
        <dbReference type="ChEBI" id="CHEBI:49883"/>
        <label>1</label>
        <note>ligand shared between dimeric partners</note>
    </ligand>
</feature>
<feature type="binding site" evidence="1">
    <location>
        <position position="75"/>
    </location>
    <ligand>
        <name>[4Fe-4S] cluster</name>
        <dbReference type="ChEBI" id="CHEBI:49883"/>
        <label>2</label>
    </ligand>
</feature>
<feature type="binding site" evidence="1">
    <location>
        <position position="76"/>
    </location>
    <ligand>
        <name>[4Fe-4S] cluster</name>
        <dbReference type="ChEBI" id="CHEBI:49883"/>
        <label>1</label>
        <note>ligand shared between dimeric partners</note>
    </ligand>
</feature>
<feature type="binding site" evidence="1">
    <location>
        <position position="78"/>
    </location>
    <ligand>
        <name>[4Fe-4S] cluster</name>
        <dbReference type="ChEBI" id="CHEBI:49883"/>
        <label>2</label>
    </ligand>
</feature>
<feature type="binding site" evidence="1">
    <location>
        <position position="83"/>
    </location>
    <ligand>
        <name>[4Fe-4S] cluster</name>
        <dbReference type="ChEBI" id="CHEBI:49883"/>
        <label>2</label>
    </ligand>
</feature>
<feature type="binding site" evidence="1">
    <location>
        <position position="93"/>
    </location>
    <ligand>
        <name>[4Fe-4S] cluster</name>
        <dbReference type="ChEBI" id="CHEBI:49883"/>
        <label>2</label>
    </ligand>
</feature>
<feature type="binding site" evidence="1">
    <location>
        <position position="116"/>
    </location>
    <ligand>
        <name>CO</name>
        <dbReference type="ChEBI" id="CHEBI:17245"/>
    </ligand>
</feature>
<feature type="binding site" evidence="1">
    <location>
        <position position="249"/>
    </location>
    <ligand>
        <name>[Ni-4Fe-4S] cluster</name>
        <dbReference type="ChEBI" id="CHEBI:47739"/>
    </ligand>
</feature>
<feature type="binding site" evidence="1">
    <location>
        <position position="277"/>
    </location>
    <ligand>
        <name>[Ni-4Fe-4S] cluster</name>
        <dbReference type="ChEBI" id="CHEBI:47739"/>
    </ligand>
</feature>
<feature type="binding site" evidence="1">
    <location>
        <position position="322"/>
    </location>
    <ligand>
        <name>[Ni-4Fe-4S] cluster</name>
        <dbReference type="ChEBI" id="CHEBI:47739"/>
    </ligand>
</feature>
<feature type="binding site" evidence="1">
    <location>
        <position position="416"/>
    </location>
    <ligand>
        <name>[4Fe-4S] cluster</name>
        <dbReference type="ChEBI" id="CHEBI:49883"/>
        <label>3</label>
    </ligand>
</feature>
<feature type="binding site" evidence="1">
    <location>
        <position position="419"/>
    </location>
    <ligand>
        <name>[4Fe-4S] cluster</name>
        <dbReference type="ChEBI" id="CHEBI:49883"/>
        <label>3</label>
    </ligand>
</feature>
<feature type="binding site" evidence="1">
    <location>
        <position position="422"/>
    </location>
    <ligand>
        <name>[4Fe-4S] cluster</name>
        <dbReference type="ChEBI" id="CHEBI:49883"/>
        <label>3</label>
    </ligand>
</feature>
<feature type="binding site" evidence="1">
    <location>
        <position position="426"/>
    </location>
    <ligand>
        <name>[4Fe-4S] cluster</name>
        <dbReference type="ChEBI" id="CHEBI:49883"/>
        <label>4</label>
    </ligand>
</feature>
<feature type="binding site" evidence="1">
    <location>
        <position position="454"/>
    </location>
    <ligand>
        <name>[4Fe-4S] cluster</name>
        <dbReference type="ChEBI" id="CHEBI:49883"/>
        <label>4</label>
    </ligand>
</feature>
<feature type="binding site" evidence="1">
    <location>
        <position position="457"/>
    </location>
    <ligand>
        <name>[4Fe-4S] cluster</name>
        <dbReference type="ChEBI" id="CHEBI:49883"/>
        <label>4</label>
    </ligand>
</feature>
<feature type="binding site" evidence="1">
    <location>
        <position position="460"/>
    </location>
    <ligand>
        <name>[4Fe-4S] cluster</name>
        <dbReference type="ChEBI" id="CHEBI:49883"/>
        <label>4</label>
    </ligand>
</feature>
<feature type="binding site" evidence="1">
    <location>
        <position position="464"/>
    </location>
    <ligand>
        <name>[4Fe-4S] cluster</name>
        <dbReference type="ChEBI" id="CHEBI:49883"/>
        <label>3</label>
    </ligand>
</feature>
<feature type="binding site" evidence="1">
    <location>
        <position position="522"/>
    </location>
    <ligand>
        <name>[Ni-4Fe-4S] cluster</name>
        <dbReference type="ChEBI" id="CHEBI:47739"/>
    </ligand>
</feature>
<feature type="binding site" evidence="1">
    <location>
        <position position="551"/>
    </location>
    <ligand>
        <name>[Ni-4Fe-4S] cluster</name>
        <dbReference type="ChEBI" id="CHEBI:47739"/>
    </ligand>
</feature>
<feature type="binding site" evidence="1">
    <location>
        <position position="586"/>
    </location>
    <ligand>
        <name>[Ni-4Fe-4S] cluster</name>
        <dbReference type="ChEBI" id="CHEBI:47739"/>
    </ligand>
</feature>
<reference key="1">
    <citation type="journal article" date="2002" name="Genome Res.">
        <title>The genome of Methanosarcina acetivorans reveals extensive metabolic and physiological diversity.</title>
        <authorList>
            <person name="Galagan J.E."/>
            <person name="Nusbaum C."/>
            <person name="Roy A."/>
            <person name="Endrizzi M.G."/>
            <person name="Macdonald P."/>
            <person name="FitzHugh W."/>
            <person name="Calvo S."/>
            <person name="Engels R."/>
            <person name="Smirnov S."/>
            <person name="Atnoor D."/>
            <person name="Brown A."/>
            <person name="Allen N."/>
            <person name="Naylor J."/>
            <person name="Stange-Thomann N."/>
            <person name="DeArellano K."/>
            <person name="Johnson R."/>
            <person name="Linton L."/>
            <person name="McEwan P."/>
            <person name="McKernan K."/>
            <person name="Talamas J."/>
            <person name="Tirrell A."/>
            <person name="Ye W."/>
            <person name="Zimmer A."/>
            <person name="Barber R.D."/>
            <person name="Cann I."/>
            <person name="Graham D.E."/>
            <person name="Grahame D.A."/>
            <person name="Guss A.M."/>
            <person name="Hedderich R."/>
            <person name="Ingram-Smith C."/>
            <person name="Kuettner H.C."/>
            <person name="Krzycki J.A."/>
            <person name="Leigh J.A."/>
            <person name="Li W."/>
            <person name="Liu J."/>
            <person name="Mukhopadhyay B."/>
            <person name="Reeve J.N."/>
            <person name="Smith K."/>
            <person name="Springer T.A."/>
            <person name="Umayam L.A."/>
            <person name="White O."/>
            <person name="White R.H."/>
            <person name="de Macario E.C."/>
            <person name="Ferry J.G."/>
            <person name="Jarrell K.F."/>
            <person name="Jing H."/>
            <person name="Macario A.J.L."/>
            <person name="Paulsen I.T."/>
            <person name="Pritchett M."/>
            <person name="Sowers K.R."/>
            <person name="Swanson R.V."/>
            <person name="Zinder S.H."/>
            <person name="Lander E."/>
            <person name="Metcalf W.W."/>
            <person name="Birren B."/>
        </authorList>
    </citation>
    <scope>NUCLEOTIDE SEQUENCE [LARGE SCALE GENOMIC DNA]</scope>
    <source>
        <strain>ATCC 35395 / DSM 2834 / JCM 12185 / C2A</strain>
    </source>
</reference>
<gene>
    <name evidence="1" type="primary">cdhA2</name>
    <name type="ordered locus">MA_3860</name>
</gene>
<comment type="function">
    <text evidence="1">Part of the ACDS complex that catalyzes the reversible cleavage of acetyl-CoA, allowing growth on acetate as sole source of carbon and energy. The alpha-epsilon subcomponent functions as a carbon monoxide dehydrogenase.</text>
</comment>
<comment type="catalytic activity">
    <reaction evidence="1">
        <text>CO + 2 oxidized [2Fe-2S]-[ferredoxin] + H2O = 2 reduced [2Fe-2S]-[ferredoxin] + CO2 + 2 H(+)</text>
        <dbReference type="Rhea" id="RHEA:21040"/>
        <dbReference type="Rhea" id="RHEA-COMP:10000"/>
        <dbReference type="Rhea" id="RHEA-COMP:10001"/>
        <dbReference type="ChEBI" id="CHEBI:15377"/>
        <dbReference type="ChEBI" id="CHEBI:15378"/>
        <dbReference type="ChEBI" id="CHEBI:16526"/>
        <dbReference type="ChEBI" id="CHEBI:17245"/>
        <dbReference type="ChEBI" id="CHEBI:33737"/>
        <dbReference type="ChEBI" id="CHEBI:33738"/>
        <dbReference type="EC" id="1.2.7.4"/>
    </reaction>
</comment>
<comment type="cofactor">
    <cofactor evidence="1">
        <name>[4Fe-4S] cluster</name>
        <dbReference type="ChEBI" id="CHEBI:49883"/>
    </cofactor>
    <text evidence="1">Binds 7 [4Fe-4S] clusters per heterotetramer.</text>
</comment>
<comment type="cofactor">
    <cofactor evidence="1">
        <name>[Ni-4Fe-4S] cluster</name>
        <dbReference type="ChEBI" id="CHEBI:47739"/>
    </cofactor>
    <text evidence="1">Binds 2 [Ni-4Fe-4S] clusters per heterotetramer.</text>
</comment>
<comment type="pathway">
    <text evidence="1">One-carbon metabolism; methanogenesis from acetate.</text>
</comment>
<comment type="subunit">
    <text evidence="1">Heterotetramer of two alpha and two epsilon subunits. The ACDS complex is made up of alpha, epsilon, beta, gamma and delta subunits with a probable stoichiometry of (alpha(2)epsilon(2))(4)-beta(8)-(gamma(1)delta(1))(8).</text>
</comment>
<comment type="domain">
    <text evidence="1">Cluster B is an all-cysteinyl-liganded 4Fe-4S cluster; cluster C is a mixed Ni-Fe-S cluster which is the active site of CO oxidation. Cluster D is also an all-cysteinyl-liganded 4Fe-4S cluster that bridges the two subunits of the CODH dimer. Contains two additional 4Fe-4S clusters, dubbed E and F, that probably transport electrons from ferredoxin to the B cluster.</text>
</comment>
<comment type="similarity">
    <text evidence="1">Belongs to the Ni-containing carbon monoxide dehydrogenase family.</text>
</comment>
<accession>Q8TJC6</accession>
<proteinExistence type="inferred from homology"/>
<name>ACDA2_METAC</name>
<keyword id="KW-0004">4Fe-4S</keyword>
<keyword id="KW-0408">Iron</keyword>
<keyword id="KW-0411">Iron-sulfur</keyword>
<keyword id="KW-0479">Metal-binding</keyword>
<keyword id="KW-0484">Methanogenesis</keyword>
<keyword id="KW-0533">Nickel</keyword>
<keyword id="KW-0560">Oxidoreductase</keyword>
<keyword id="KW-1185">Reference proteome</keyword>
<keyword id="KW-0677">Repeat</keyword>
<sequence>MSKLTTGSFSIEDLESVQITINNIVGAAKEAAEEKAKELGPMGPTAMAGLASYRSWNLLLLDRYEPVLTPMCDQCCYCTYGPCDLSGNKRGACGIDMAGQTGREFFLRVITGTACHAAHGRHLLDHVIEVFGEDLPLNLGESNVLTPNVTICTGLSPKTLGECRAPMEYVEEQLTQLLATIHAGQESAEIDYDSKALFSGSLDHVGMEVSDIAQVSAYDFPKADPEAPLIEIGMGSIDKSKPLIVAIGHNVAGVTYIMDYMEENNLTDKMEIAGLCCTAFDMTRYKEADRRAPYAKIVGSLAKELKVIRSGMPDVIVVDEQCVRGDVLSESQKLKIPVIASNEKIMMGLPDRTDADVDSIVEEIKSGAIPGCVMLDYDKLGELIPKIAEVMAPIRDAEGITAIPTDEEFKVYIDKCVKCGECMLACPEELDIPEALEYAAKGSYEYLEALHDVCIGCRRCEQVCKKEIPILNVLEKAAQKSISEEKGWVRSGRGQASDAEIRKEGLNLVMGTTPGIIAIIGCPNYPAGTKDVYLIAEEFLKRNYLLAVSGCSAMDIGMFKDEDGKTLYEKYPGTFAGGGLLNTGSCVSNAHISGAAEKVAGIFAQRTLAGNLAEIADYTLNRVGACGLAWGAYSQKAASIGTGCNIYGIPAVLGPHSSKYRRALIAKNYDESKWKVYDGRDGSEMTIPPAPEFLLTTAETWQEAIPMMAKACIRPSDNNMGRSIKLTHWMELSKKYLGVEPEDWWKFVRNEADLPLAKREELLKRLEAEHGWEIDWKRKKIISGPKIKFDVSAQPTNLKRLCKEA</sequence>
<organism>
    <name type="scientific">Methanosarcina acetivorans (strain ATCC 35395 / DSM 2834 / JCM 12185 / C2A)</name>
    <dbReference type="NCBI Taxonomy" id="188937"/>
    <lineage>
        <taxon>Archaea</taxon>
        <taxon>Methanobacteriati</taxon>
        <taxon>Methanobacteriota</taxon>
        <taxon>Stenosarchaea group</taxon>
        <taxon>Methanomicrobia</taxon>
        <taxon>Methanosarcinales</taxon>
        <taxon>Methanosarcinaceae</taxon>
        <taxon>Methanosarcina</taxon>
    </lineage>
</organism>
<evidence type="ECO:0000255" key="1">
    <source>
        <dbReference type="HAMAP-Rule" id="MF_01137"/>
    </source>
</evidence>